<dbReference type="EC" id="1.18.6.1"/>
<dbReference type="EMBL" id="X73824">
    <property type="protein sequence ID" value="CAA52045.1"/>
    <property type="molecule type" value="Genomic_DNA"/>
</dbReference>
<dbReference type="EMBL" id="L20472">
    <property type="protein sequence ID" value="AAC36816.1"/>
    <property type="molecule type" value="Unassigned_DNA"/>
</dbReference>
<dbReference type="EMBL" id="CP000117">
    <property type="protein sequence ID" value="ABA23632.1"/>
    <property type="molecule type" value="Genomic_DNA"/>
</dbReference>
<dbReference type="PIR" id="B36936">
    <property type="entry name" value="B36936"/>
</dbReference>
<dbReference type="SMR" id="Q57302"/>
<dbReference type="STRING" id="240292.Ava_4027"/>
<dbReference type="KEGG" id="ava:Ava_4027"/>
<dbReference type="eggNOG" id="COG2710">
    <property type="taxonomic scope" value="Bacteria"/>
</dbReference>
<dbReference type="HOGENOM" id="CLU_025876_2_0_3"/>
<dbReference type="BioCyc" id="MetaCyc:MONOMER-16482"/>
<dbReference type="Proteomes" id="UP000002533">
    <property type="component" value="Chromosome"/>
</dbReference>
<dbReference type="GO" id="GO:0016613">
    <property type="term" value="C:vanadium-iron nitrogenase complex"/>
    <property type="evidence" value="ECO:0007669"/>
    <property type="project" value="InterPro"/>
</dbReference>
<dbReference type="GO" id="GO:0005524">
    <property type="term" value="F:ATP binding"/>
    <property type="evidence" value="ECO:0007669"/>
    <property type="project" value="UniProtKB-KW"/>
</dbReference>
<dbReference type="GO" id="GO:0051536">
    <property type="term" value="F:iron-sulfur cluster binding"/>
    <property type="evidence" value="ECO:0007669"/>
    <property type="project" value="UniProtKB-KW"/>
</dbReference>
<dbReference type="GO" id="GO:0046872">
    <property type="term" value="F:metal ion binding"/>
    <property type="evidence" value="ECO:0007669"/>
    <property type="project" value="UniProtKB-KW"/>
</dbReference>
<dbReference type="GO" id="GO:0016163">
    <property type="term" value="F:nitrogenase activity"/>
    <property type="evidence" value="ECO:0007669"/>
    <property type="project" value="UniProtKB-EC"/>
</dbReference>
<dbReference type="GO" id="GO:0009399">
    <property type="term" value="P:nitrogen fixation"/>
    <property type="evidence" value="ECO:0007669"/>
    <property type="project" value="UniProtKB-KW"/>
</dbReference>
<dbReference type="CDD" id="cd01973">
    <property type="entry name" value="Nitrogenase_VFe_beta_like"/>
    <property type="match status" value="1"/>
</dbReference>
<dbReference type="Gene3D" id="3.40.50.1980">
    <property type="entry name" value="Nitrogenase molybdenum iron protein domain"/>
    <property type="match status" value="3"/>
</dbReference>
<dbReference type="Gene3D" id="1.20.89.10">
    <property type="entry name" value="Nitrogenase Molybdenum-iron Protein, subunit B, domain 4"/>
    <property type="match status" value="1"/>
</dbReference>
<dbReference type="InterPro" id="IPR050152">
    <property type="entry name" value="ChlB/BchB/BchZ"/>
</dbReference>
<dbReference type="InterPro" id="IPR000510">
    <property type="entry name" value="Nase/OxRdtase_comp1"/>
</dbReference>
<dbReference type="InterPro" id="IPR000318">
    <property type="entry name" value="Nase_comp1_CS"/>
</dbReference>
<dbReference type="InterPro" id="IPR014281">
    <property type="entry name" value="Nase_VnfK"/>
</dbReference>
<dbReference type="NCBIfam" id="TIGR02932">
    <property type="entry name" value="vnfK_nitrog"/>
    <property type="match status" value="1"/>
</dbReference>
<dbReference type="PANTHER" id="PTHR33712">
    <property type="entry name" value="LIGHT-INDEPENDENT PROTOCHLOROPHYLLIDE REDUCTASE SUBUNIT B"/>
    <property type="match status" value="1"/>
</dbReference>
<dbReference type="PANTHER" id="PTHR33712:SF7">
    <property type="entry name" value="LIGHT-INDEPENDENT PROTOCHLOROPHYLLIDE REDUCTASE SUBUNIT B"/>
    <property type="match status" value="1"/>
</dbReference>
<dbReference type="Pfam" id="PF00148">
    <property type="entry name" value="Oxidored_nitro"/>
    <property type="match status" value="1"/>
</dbReference>
<dbReference type="SUPFAM" id="SSF53807">
    <property type="entry name" value="Helical backbone' metal receptor"/>
    <property type="match status" value="1"/>
</dbReference>
<dbReference type="PROSITE" id="PS00699">
    <property type="entry name" value="NITROGENASE_1_1"/>
    <property type="match status" value="1"/>
</dbReference>
<dbReference type="PROSITE" id="PS00090">
    <property type="entry name" value="NITROGENASE_1_2"/>
    <property type="match status" value="1"/>
</dbReference>
<feature type="chain" id="PRO_0000153086" description="Nitrogenase vanadium-iron protein beta chain">
    <location>
        <begin position="1"/>
        <end position="463"/>
    </location>
</feature>
<feature type="binding site" evidence="1">
    <location>
        <position position="20"/>
    </location>
    <ligand>
        <name>[8Fe-7S] cluster</name>
        <dbReference type="ChEBI" id="CHEBI:21143"/>
        <note>ligand shared with alpha chain</note>
    </ligand>
</feature>
<feature type="binding site" evidence="1">
    <location>
        <position position="45"/>
    </location>
    <ligand>
        <name>[8Fe-7S] cluster</name>
        <dbReference type="ChEBI" id="CHEBI:21143"/>
        <note>ligand shared with alpha chain</note>
    </ligand>
</feature>
<feature type="binding site" evidence="1">
    <location>
        <position position="104"/>
    </location>
    <ligand>
        <name>[8Fe-7S] cluster</name>
        <dbReference type="ChEBI" id="CHEBI:21143"/>
        <note>ligand shared with alpha chain</note>
    </ligand>
</feature>
<feature type="binding site" evidence="1">
    <location>
        <position position="142"/>
    </location>
    <ligand>
        <name>[8Fe-7S] cluster</name>
        <dbReference type="ChEBI" id="CHEBI:21143"/>
        <note>ligand shared with alpha chain</note>
    </ligand>
</feature>
<feature type="sequence conflict" description="In Ref. 1; CAA52045/AAC36816." evidence="2" ref="1">
    <original>A</original>
    <variation>V</variation>
    <location>
        <position position="64"/>
    </location>
</feature>
<comment type="function">
    <text>This vanadium-iron protein is part of the nitrogenase complex that catalyzes the key enzymatic reactions in nitrogen fixation.</text>
</comment>
<comment type="catalytic activity">
    <reaction>
        <text>N2 + 8 reduced [2Fe-2S]-[ferredoxin] + 16 ATP + 16 H2O = H2 + 8 oxidized [2Fe-2S]-[ferredoxin] + 2 NH4(+) + 16 ADP + 16 phosphate + 6 H(+)</text>
        <dbReference type="Rhea" id="RHEA:21448"/>
        <dbReference type="Rhea" id="RHEA-COMP:10000"/>
        <dbReference type="Rhea" id="RHEA-COMP:10001"/>
        <dbReference type="ChEBI" id="CHEBI:15377"/>
        <dbReference type="ChEBI" id="CHEBI:15378"/>
        <dbReference type="ChEBI" id="CHEBI:17997"/>
        <dbReference type="ChEBI" id="CHEBI:18276"/>
        <dbReference type="ChEBI" id="CHEBI:28938"/>
        <dbReference type="ChEBI" id="CHEBI:30616"/>
        <dbReference type="ChEBI" id="CHEBI:33737"/>
        <dbReference type="ChEBI" id="CHEBI:33738"/>
        <dbReference type="ChEBI" id="CHEBI:43474"/>
        <dbReference type="ChEBI" id="CHEBI:456216"/>
        <dbReference type="EC" id="1.18.6.1"/>
    </reaction>
</comment>
<comment type="cofactor">
    <cofactor evidence="1">
        <name>[8Fe-7S] cluster</name>
        <dbReference type="ChEBI" id="CHEBI:21143"/>
    </cofactor>
    <text evidence="1">Binds 1 [8Fe-7S] cluster per heterodimer.</text>
</comment>
<comment type="subunit">
    <text>Hexamer of two alpha, two beta, and two delta chains.</text>
</comment>
<comment type="similarity">
    <text evidence="2">Belongs to the NifD/NifK/NifE/NifN family.</text>
</comment>
<protein>
    <recommendedName>
        <fullName>Nitrogenase vanadium-iron protein beta chain</fullName>
        <ecNumber>1.18.6.1</ecNumber>
    </recommendedName>
    <alternativeName>
        <fullName>Dinitrogenase 2 subunit beta</fullName>
    </alternativeName>
    <alternativeName>
        <fullName>Nitrogenase component I</fullName>
    </alternativeName>
</protein>
<organism>
    <name type="scientific">Trichormus variabilis (strain ATCC 29413 / PCC 7937)</name>
    <name type="common">Anabaena variabilis</name>
    <dbReference type="NCBI Taxonomy" id="240292"/>
    <lineage>
        <taxon>Bacteria</taxon>
        <taxon>Bacillati</taxon>
        <taxon>Cyanobacteriota</taxon>
        <taxon>Cyanophyceae</taxon>
        <taxon>Nostocales</taxon>
        <taxon>Nostocaceae</taxon>
        <taxon>Trichormus</taxon>
    </lineage>
</organism>
<gene>
    <name type="primary">vnfK</name>
    <name type="ordered locus">Ava_4027</name>
</gene>
<proteinExistence type="inferred from homology"/>
<name>VNFK_TRIV2</name>
<sequence>MTLAVNKKERAGVINPIFTCQPAGAEYATIGVKDCIPLVHGGQGCSMFVRLIFAQHLKENFDIASSSLHEASAVFGGMPRIEEGVKTLVARYPDLRLIPIITTCSTETIGDDVEGTINKVNKFLKKEYPNREVKLIPVHTPSYRGSQVTGYDAGVTSLITNLAKKGEPNGKLNIITGWVNPGDVTEVKHILSEMGVDANILLDTETFNAPTMPDKNSFTFGNTTIEDIAGSANAIGTIALCKYEGGNAAKFLQEQFDVPAIVGPTPIGIKNTDAWLQNIKKLTGKPIPESLVVERGKAIDSLADLAHMYFANKRVAIYGDPDLVIGLAEFCLEVELEPVLLLLGDDNQAASKDPRLAELAKRANHAEYDIDVIWNADLWELESRVKEKGDIDLILGHSKGRYIAIDNKIPMVRVGFPTFDRAGLWKNPVIGYRGAEWLGDAIANAMFADMEYKHDREWILNVW</sequence>
<evidence type="ECO:0000250" key="1"/>
<evidence type="ECO:0000305" key="2"/>
<keyword id="KW-0067">ATP-binding</keyword>
<keyword id="KW-0408">Iron</keyword>
<keyword id="KW-0411">Iron-sulfur</keyword>
<keyword id="KW-0479">Metal-binding</keyword>
<keyword id="KW-0535">Nitrogen fixation</keyword>
<keyword id="KW-0547">Nucleotide-binding</keyword>
<keyword id="KW-0560">Oxidoreductase</keyword>
<reference key="1">
    <citation type="journal article" date="1993" name="J. Bacteriol.">
        <title>Characterization of genes for an alternative nitrogenase in the cyanobacterium Anabaena variabilis.</title>
        <authorList>
            <person name="Thiel T."/>
        </authorList>
    </citation>
    <scope>NUCLEOTIDE SEQUENCE [GENOMIC DNA]</scope>
</reference>
<reference key="2">
    <citation type="journal article" date="2014" name="Stand. Genomic Sci.">
        <title>Complete genome sequence of Anabaena variabilis ATCC 29413.</title>
        <authorList>
            <person name="Thiel T."/>
            <person name="Pratte B.S."/>
            <person name="Zhong J."/>
            <person name="Goodwin L."/>
            <person name="Copeland A."/>
            <person name="Lucas S."/>
            <person name="Han C."/>
            <person name="Pitluck S."/>
            <person name="Land M.L."/>
            <person name="Kyrpides N.C."/>
            <person name="Woyke T."/>
        </authorList>
    </citation>
    <scope>NUCLEOTIDE SEQUENCE [LARGE SCALE GENOMIC DNA]</scope>
    <source>
        <strain>ATCC 29413 / PCC 7937</strain>
    </source>
</reference>
<accession>Q57302</accession>
<accession>Q3M5V4</accession>